<comment type="function">
    <text evidence="1">Functions as a response regulator involved in His-to-Asp phosphorelay signal transduction system. Phosphorylation of the Asp residue in the receiver domain activates the ability of the protein to promote the transcription of target genes. May directly activate some type-A response regulators in response to cytokinins.</text>
</comment>
<comment type="PTM">
    <text evidence="4">Two-component system major event consists of a His-to-Asp phosphorelay between a sensor histidine kinase (HK) and a response regulator (RR). In plants, the His-to-Asp phosphorelay involves an additional intermediate named Histidine-containing phosphotransfer protein (HPt). This multistep phosphorelay consists of a His-Asp-His-Asp sequential transfer of a phosphate group between first a His and an Asp of the HK protein, followed by the transfer to a conserved His of the HPt protein and finally the transfer to an Asp in the receiver domain of the RR protein.</text>
</comment>
<comment type="similarity">
    <text evidence="4">Belongs to the ARR family. Type-B subfamily.</text>
</comment>
<comment type="sequence caution" evidence="4">
    <conflict type="erroneous gene model prediction">
        <sequence resource="EMBL-CDS" id="BAC99522"/>
    </conflict>
</comment>
<comment type="sequence caution" evidence="4">
    <conflict type="erroneous gene model prediction">
        <sequence resource="EMBL-CDS" id="BAC99523"/>
    </conflict>
</comment>
<sequence length="481" mass="51853">MEDMLSFFSSGLHVMLVDDDTKNTRTATKTLSMLHCPVVSTHTTACAGLRTLSGDNMLDVQTVLCDVSKVVSSGFDFRRVNETEHQIPVIYLLSTTEPEQMVAGEDAEFLNHLLLKATYILRKPLDWATIALWRVVAWHRCCLEERVPGDSMDDIAAHAGAGGEDGNDDDVVVIEEPQVHFKLVRSRGSRKRQLTINVDSGSSDSADANQRKKIEHMNDAKGPVGQHVASHLQLPAQEYCTKQQKDLDERRLISSDSLFLKAIFPTLNVSPSSPLILAGGAVPTAFIPRVGMTVNIGKAPMIELPFGVPVDDFLVGETAYGGAGPSIGAPSNDAAVAYAYTGALNNNTAVGSLMAPPIDEPTFTLTDPIVGTKGEGVVHIVITSEDQNALAAVEAGAPNNAEPFMMPDQVDLEEDIMFSLESLLGLDEDMIPMEDAGGEAAEGSLNIGEGGMEIGWDLDLDDILMNNTNEFAFLDDLAWIE</sequence>
<accession>Q6ZCY2</accession>
<accession>Q6ZCY3</accession>
<reference key="1">
    <citation type="journal article" date="2005" name="Nature">
        <title>The map-based sequence of the rice genome.</title>
        <authorList>
            <consortium name="International rice genome sequencing project (IRGSP)"/>
        </authorList>
    </citation>
    <scope>NUCLEOTIDE SEQUENCE [LARGE SCALE GENOMIC DNA]</scope>
    <source>
        <strain>cv. Nipponbare</strain>
    </source>
</reference>
<reference key="2">
    <citation type="journal article" date="2008" name="Nucleic Acids Res.">
        <title>The rice annotation project database (RAP-DB): 2008 update.</title>
        <authorList>
            <consortium name="The rice annotation project (RAP)"/>
        </authorList>
    </citation>
    <scope>GENOME REANNOTATION</scope>
    <source>
        <strain>cv. Nipponbare</strain>
    </source>
</reference>
<reference key="3">
    <citation type="journal article" date="2013" name="Rice">
        <title>Improvement of the Oryza sativa Nipponbare reference genome using next generation sequence and optical map data.</title>
        <authorList>
            <person name="Kawahara Y."/>
            <person name="de la Bastide M."/>
            <person name="Hamilton J.P."/>
            <person name="Kanamori H."/>
            <person name="McCombie W.R."/>
            <person name="Ouyang S."/>
            <person name="Schwartz D.C."/>
            <person name="Tanaka T."/>
            <person name="Wu J."/>
            <person name="Zhou S."/>
            <person name="Childs K.L."/>
            <person name="Davidson R.M."/>
            <person name="Lin H."/>
            <person name="Quesada-Ocampo L."/>
            <person name="Vaillancourt B."/>
            <person name="Sakai H."/>
            <person name="Lee S.S."/>
            <person name="Kim J."/>
            <person name="Numa H."/>
            <person name="Itoh T."/>
            <person name="Buell C.R."/>
            <person name="Matsumoto T."/>
        </authorList>
    </citation>
    <scope>GENOME REANNOTATION</scope>
    <source>
        <strain>cv. Nipponbare</strain>
    </source>
</reference>
<reference key="4">
    <citation type="journal article" date="2007" name="Plant Physiol.">
        <title>Nomenclature for two-component signaling elements of rice.</title>
        <authorList>
            <person name="Schaller G.E."/>
            <person name="Doi K."/>
            <person name="Hwang I."/>
            <person name="Kieber J.J."/>
            <person name="Khurana J.P."/>
            <person name="Kurata N."/>
            <person name="Mizuno T."/>
            <person name="Pareek A."/>
            <person name="Shiu S.H."/>
            <person name="Wu P."/>
            <person name="Yip W.K."/>
        </authorList>
    </citation>
    <scope>GENE FAMILY</scope>
    <scope>NOMENCLATURE</scope>
</reference>
<feature type="chain" id="PRO_0000433856" description="Two-component response regulator ORR32">
    <location>
        <begin position="1"/>
        <end position="481"/>
    </location>
</feature>
<feature type="domain" description="Response regulatory" evidence="2">
    <location>
        <begin position="13"/>
        <end position="138"/>
    </location>
</feature>
<feature type="modified residue" description="4-aspartylphosphate" evidence="2">
    <location>
        <position position="66"/>
    </location>
</feature>
<dbReference type="EMBL" id="AP004556">
    <property type="protein sequence ID" value="BAC99522.1"/>
    <property type="status" value="ALT_SEQ"/>
    <property type="molecule type" value="Genomic_DNA"/>
</dbReference>
<dbReference type="EMBL" id="AP004556">
    <property type="protein sequence ID" value="BAC99523.1"/>
    <property type="status" value="ALT_SEQ"/>
    <property type="molecule type" value="Genomic_DNA"/>
</dbReference>
<dbReference type="EMBL" id="AP008214">
    <property type="status" value="NOT_ANNOTATED_CDS"/>
    <property type="molecule type" value="Genomic_DNA"/>
</dbReference>
<dbReference type="EMBL" id="AP014964">
    <property type="status" value="NOT_ANNOTATED_CDS"/>
    <property type="molecule type" value="Genomic_DNA"/>
</dbReference>
<dbReference type="SMR" id="Q6ZCY2"/>
<dbReference type="FunCoup" id="Q6ZCY2">
    <property type="interactions" value="242"/>
</dbReference>
<dbReference type="STRING" id="39947.Q6ZCY2"/>
<dbReference type="PaxDb" id="39947-Q6ZCY2"/>
<dbReference type="InParanoid" id="Q6ZCY2"/>
<dbReference type="Proteomes" id="UP000000763">
    <property type="component" value="Chromosome 8"/>
</dbReference>
<dbReference type="Proteomes" id="UP000059680">
    <property type="component" value="Chromosome 8"/>
</dbReference>
<dbReference type="GO" id="GO:0009736">
    <property type="term" value="P:cytokinin-activated signaling pathway"/>
    <property type="evidence" value="ECO:0007669"/>
    <property type="project" value="UniProtKB-KW"/>
</dbReference>
<dbReference type="GO" id="GO:0000160">
    <property type="term" value="P:phosphorelay signal transduction system"/>
    <property type="evidence" value="ECO:0007669"/>
    <property type="project" value="UniProtKB-KW"/>
</dbReference>
<dbReference type="Gene3D" id="3.40.50.2300">
    <property type="match status" value="1"/>
</dbReference>
<dbReference type="InterPro" id="IPR011006">
    <property type="entry name" value="CheY-like_superfamily"/>
</dbReference>
<dbReference type="SUPFAM" id="SSF52172">
    <property type="entry name" value="CheY-like"/>
    <property type="match status" value="1"/>
</dbReference>
<gene>
    <name evidence="3" type="primary">RR32</name>
    <name evidence="4" type="ordered locus">LOC_Os08g17760</name>
    <name evidence="5" type="ORF">P0026A08.18</name>
    <name evidence="6" type="ORF">P0026A08.19</name>
</gene>
<evidence type="ECO:0000250" key="1">
    <source>
        <dbReference type="UniProtKB" id="Q940D0"/>
    </source>
</evidence>
<evidence type="ECO:0000255" key="2">
    <source>
        <dbReference type="PROSITE-ProRule" id="PRU00169"/>
    </source>
</evidence>
<evidence type="ECO:0000303" key="3">
    <source>
    </source>
</evidence>
<evidence type="ECO:0000305" key="4"/>
<evidence type="ECO:0000312" key="5">
    <source>
        <dbReference type="EMBL" id="BAC99522.1"/>
    </source>
</evidence>
<evidence type="ECO:0000312" key="6">
    <source>
        <dbReference type="EMBL" id="BAC99523.1"/>
    </source>
</evidence>
<keyword id="KW-0010">Activator</keyword>
<keyword id="KW-0932">Cytokinin signaling pathway</keyword>
<keyword id="KW-0597">Phosphoprotein</keyword>
<keyword id="KW-1185">Reference proteome</keyword>
<keyword id="KW-0902">Two-component regulatory system</keyword>
<protein>
    <recommendedName>
        <fullName evidence="4">Two-component response regulator ORR32</fullName>
    </recommendedName>
</protein>
<organism>
    <name type="scientific">Oryza sativa subsp. japonica</name>
    <name type="common">Rice</name>
    <dbReference type="NCBI Taxonomy" id="39947"/>
    <lineage>
        <taxon>Eukaryota</taxon>
        <taxon>Viridiplantae</taxon>
        <taxon>Streptophyta</taxon>
        <taxon>Embryophyta</taxon>
        <taxon>Tracheophyta</taxon>
        <taxon>Spermatophyta</taxon>
        <taxon>Magnoliopsida</taxon>
        <taxon>Liliopsida</taxon>
        <taxon>Poales</taxon>
        <taxon>Poaceae</taxon>
        <taxon>BOP clade</taxon>
        <taxon>Oryzoideae</taxon>
        <taxon>Oryzeae</taxon>
        <taxon>Oryzinae</taxon>
        <taxon>Oryza</taxon>
        <taxon>Oryza sativa</taxon>
    </lineage>
</organism>
<name>ORR32_ORYSJ</name>
<proteinExistence type="inferred from homology"/>